<comment type="function">
    <text evidence="1">The actual biological function of YdiB remains unclear, nor is it known whether 3-dehydroshikimate or quinate represents the natural substrate. Catalyzes the reversible NAD-dependent reduction of both 3-dehydroshikimate (DHSA) and 3-dehydroquinate to yield shikimate (SA) and quinate, respectively. It can use both NAD or NADP for catalysis, however it has higher catalytic efficiency with NAD.</text>
</comment>
<comment type="catalytic activity">
    <reaction evidence="1">
        <text>L-quinate + NAD(+) = 3-dehydroquinate + NADH + H(+)</text>
        <dbReference type="Rhea" id="RHEA:22364"/>
        <dbReference type="ChEBI" id="CHEBI:15378"/>
        <dbReference type="ChEBI" id="CHEBI:29751"/>
        <dbReference type="ChEBI" id="CHEBI:32364"/>
        <dbReference type="ChEBI" id="CHEBI:57540"/>
        <dbReference type="ChEBI" id="CHEBI:57945"/>
        <dbReference type="EC" id="1.1.1.282"/>
    </reaction>
</comment>
<comment type="catalytic activity">
    <reaction evidence="1">
        <text>L-quinate + NADP(+) = 3-dehydroquinate + NADPH + H(+)</text>
        <dbReference type="Rhea" id="RHEA:18425"/>
        <dbReference type="ChEBI" id="CHEBI:15378"/>
        <dbReference type="ChEBI" id="CHEBI:29751"/>
        <dbReference type="ChEBI" id="CHEBI:32364"/>
        <dbReference type="ChEBI" id="CHEBI:57783"/>
        <dbReference type="ChEBI" id="CHEBI:58349"/>
        <dbReference type="EC" id="1.1.1.282"/>
    </reaction>
</comment>
<comment type="catalytic activity">
    <reaction evidence="1">
        <text>shikimate + NADP(+) = 3-dehydroshikimate + NADPH + H(+)</text>
        <dbReference type="Rhea" id="RHEA:17737"/>
        <dbReference type="ChEBI" id="CHEBI:15378"/>
        <dbReference type="ChEBI" id="CHEBI:16630"/>
        <dbReference type="ChEBI" id="CHEBI:36208"/>
        <dbReference type="ChEBI" id="CHEBI:57783"/>
        <dbReference type="ChEBI" id="CHEBI:58349"/>
        <dbReference type="EC" id="1.1.1.282"/>
    </reaction>
</comment>
<comment type="catalytic activity">
    <reaction evidence="1">
        <text>shikimate + NAD(+) = 3-dehydroshikimate + NADH + H(+)</text>
        <dbReference type="Rhea" id="RHEA:17741"/>
        <dbReference type="ChEBI" id="CHEBI:15378"/>
        <dbReference type="ChEBI" id="CHEBI:16630"/>
        <dbReference type="ChEBI" id="CHEBI:36208"/>
        <dbReference type="ChEBI" id="CHEBI:57540"/>
        <dbReference type="ChEBI" id="CHEBI:57945"/>
        <dbReference type="EC" id="1.1.1.282"/>
    </reaction>
</comment>
<comment type="pathway">
    <text evidence="1">Metabolic intermediate biosynthesis; chorismate biosynthesis; chorismate from D-erythrose 4-phosphate and phosphoenolpyruvate: step 4/7.</text>
</comment>
<comment type="subunit">
    <text evidence="1">Homodimer.</text>
</comment>
<comment type="similarity">
    <text evidence="1">Belongs to the shikimate dehydrogenase family.</text>
</comment>
<organism>
    <name type="scientific">Escherichia coli (strain SMS-3-5 / SECEC)</name>
    <dbReference type="NCBI Taxonomy" id="439855"/>
    <lineage>
        <taxon>Bacteria</taxon>
        <taxon>Pseudomonadati</taxon>
        <taxon>Pseudomonadota</taxon>
        <taxon>Gammaproteobacteria</taxon>
        <taxon>Enterobacterales</taxon>
        <taxon>Enterobacteriaceae</taxon>
        <taxon>Escherichia</taxon>
    </lineage>
</organism>
<evidence type="ECO:0000255" key="1">
    <source>
        <dbReference type="HAMAP-Rule" id="MF_01578"/>
    </source>
</evidence>
<reference key="1">
    <citation type="journal article" date="2008" name="J. Bacteriol.">
        <title>Insights into the environmental resistance gene pool from the genome sequence of the multidrug-resistant environmental isolate Escherichia coli SMS-3-5.</title>
        <authorList>
            <person name="Fricke W.F."/>
            <person name="Wright M.S."/>
            <person name="Lindell A.H."/>
            <person name="Harkins D.M."/>
            <person name="Baker-Austin C."/>
            <person name="Ravel J."/>
            <person name="Stepanauskas R."/>
        </authorList>
    </citation>
    <scope>NUCLEOTIDE SEQUENCE [LARGE SCALE GENOMIC DNA]</scope>
    <source>
        <strain>SMS-3-5 / SECEC</strain>
    </source>
</reference>
<gene>
    <name evidence="1" type="primary">ydiB</name>
    <name type="ordered locus">EcSMS35_1504</name>
</gene>
<accession>B1LE44</accession>
<name>YDIB_ECOSM</name>
<feature type="chain" id="PRO_1000147554" description="Quinate/shikimate dehydrogenase">
    <location>
        <begin position="1"/>
        <end position="288"/>
    </location>
</feature>
<feature type="binding site" evidence="1">
    <location>
        <position position="71"/>
    </location>
    <ligand>
        <name>substrate</name>
    </ligand>
</feature>
<feature type="binding site" evidence="1">
    <location>
        <position position="107"/>
    </location>
    <ligand>
        <name>substrate</name>
    </ligand>
</feature>
<feature type="binding site" evidence="1">
    <location>
        <begin position="132"/>
        <end position="135"/>
    </location>
    <ligand>
        <name>NAD(+)</name>
        <dbReference type="ChEBI" id="CHEBI:57540"/>
    </ligand>
</feature>
<feature type="binding site" evidence="1">
    <location>
        <begin position="155"/>
        <end position="158"/>
    </location>
    <ligand>
        <name>NAD(+)</name>
        <dbReference type="ChEBI" id="CHEBI:57540"/>
    </ligand>
</feature>
<feature type="binding site" evidence="1">
    <location>
        <position position="205"/>
    </location>
    <ligand>
        <name>NAD(+)</name>
        <dbReference type="ChEBI" id="CHEBI:57540"/>
    </ligand>
</feature>
<feature type="binding site" evidence="1">
    <location>
        <begin position="232"/>
        <end position="235"/>
    </location>
    <ligand>
        <name>NAD(+)</name>
        <dbReference type="ChEBI" id="CHEBI:57540"/>
    </ligand>
</feature>
<feature type="binding site" evidence="1">
    <location>
        <position position="255"/>
    </location>
    <ligand>
        <name>NAD(+)</name>
        <dbReference type="ChEBI" id="CHEBI:57540"/>
    </ligand>
</feature>
<sequence>MNVTAKYELIGLMAYPIRHSLSPEMQNKALEKAGLPFTYMAFEVDNDSFPAAIEGLKALKMRGTGVSMPNKQLACEYVDELTPAAKLVGAINTIVNDDGYLRGYNTDGTGHIRAIKESGFDIKGKTMVLLGAGGASTAIGAQGAIEGLKEIKLFNRRDEFFDKALAFAQRVNENTDCVVTVTDLADQQAFAEALASADILTNGTKVGMKPLENESLVHDISLLHPGLLVTECVYNPHMTKLLQQAQQAGCKTIDGYGMLLWQGAEQFTLWTGKDFPLEYVKQVMGFGA</sequence>
<protein>
    <recommendedName>
        <fullName evidence="1">Quinate/shikimate dehydrogenase</fullName>
        <ecNumber evidence="1">1.1.1.282</ecNumber>
    </recommendedName>
    <alternativeName>
        <fullName evidence="1">NAD-dependent shikimate 5-dehydrogenase</fullName>
    </alternativeName>
</protein>
<dbReference type="EC" id="1.1.1.282" evidence="1"/>
<dbReference type="EMBL" id="CP000970">
    <property type="protein sequence ID" value="ACB15871.1"/>
    <property type="molecule type" value="Genomic_DNA"/>
</dbReference>
<dbReference type="RefSeq" id="WP_001103253.1">
    <property type="nucleotide sequence ID" value="NC_010498.1"/>
</dbReference>
<dbReference type="SMR" id="B1LE44"/>
<dbReference type="KEGG" id="ecm:EcSMS35_1504"/>
<dbReference type="HOGENOM" id="CLU_044063_4_4_6"/>
<dbReference type="UniPathway" id="UPA00053">
    <property type="reaction ID" value="UER00087"/>
</dbReference>
<dbReference type="Proteomes" id="UP000007011">
    <property type="component" value="Chromosome"/>
</dbReference>
<dbReference type="GO" id="GO:0030266">
    <property type="term" value="F:quinate 3-dehydrogenase (NAD+) activity"/>
    <property type="evidence" value="ECO:0007669"/>
    <property type="project" value="UniProtKB-UniRule"/>
</dbReference>
<dbReference type="GO" id="GO:0052733">
    <property type="term" value="F:quinate 3-dehydrogenase (NADP+) activity"/>
    <property type="evidence" value="ECO:0007669"/>
    <property type="project" value="InterPro"/>
</dbReference>
<dbReference type="GO" id="GO:0052734">
    <property type="term" value="F:shikimate 3-dehydrogenase (NAD+) activity"/>
    <property type="evidence" value="ECO:0007669"/>
    <property type="project" value="InterPro"/>
</dbReference>
<dbReference type="GO" id="GO:0004764">
    <property type="term" value="F:shikimate 3-dehydrogenase (NADP+) activity"/>
    <property type="evidence" value="ECO:0007669"/>
    <property type="project" value="UniProtKB-UniRule"/>
</dbReference>
<dbReference type="GO" id="GO:0008652">
    <property type="term" value="P:amino acid biosynthetic process"/>
    <property type="evidence" value="ECO:0007669"/>
    <property type="project" value="UniProtKB-KW"/>
</dbReference>
<dbReference type="GO" id="GO:0009073">
    <property type="term" value="P:aromatic amino acid family biosynthetic process"/>
    <property type="evidence" value="ECO:0007669"/>
    <property type="project" value="UniProtKB-KW"/>
</dbReference>
<dbReference type="GO" id="GO:0009423">
    <property type="term" value="P:chorismate biosynthetic process"/>
    <property type="evidence" value="ECO:0007669"/>
    <property type="project" value="UniProtKB-UniRule"/>
</dbReference>
<dbReference type="GO" id="GO:0019632">
    <property type="term" value="P:shikimate metabolic process"/>
    <property type="evidence" value="ECO:0007669"/>
    <property type="project" value="TreeGrafter"/>
</dbReference>
<dbReference type="CDD" id="cd01065">
    <property type="entry name" value="NAD_bind_Shikimate_DH"/>
    <property type="match status" value="1"/>
</dbReference>
<dbReference type="FunFam" id="3.40.50.10860:FF:000004">
    <property type="entry name" value="Quinate/shikimate dehydrogenase"/>
    <property type="match status" value="1"/>
</dbReference>
<dbReference type="FunFam" id="3.40.50.720:FF:000086">
    <property type="entry name" value="Quinate/shikimate dehydrogenase"/>
    <property type="match status" value="1"/>
</dbReference>
<dbReference type="Gene3D" id="3.40.50.10860">
    <property type="entry name" value="Leucine Dehydrogenase, chain A, domain 1"/>
    <property type="match status" value="1"/>
</dbReference>
<dbReference type="Gene3D" id="3.40.50.720">
    <property type="entry name" value="NAD(P)-binding Rossmann-like Domain"/>
    <property type="match status" value="1"/>
</dbReference>
<dbReference type="HAMAP" id="MF_00222">
    <property type="entry name" value="Shikimate_DH_AroE"/>
    <property type="match status" value="1"/>
</dbReference>
<dbReference type="HAMAP" id="MF_01578">
    <property type="entry name" value="Shikimate_DH_YdiB"/>
    <property type="match status" value="1"/>
</dbReference>
<dbReference type="InterPro" id="IPR046346">
    <property type="entry name" value="Aminoacid_DH-like_N_sf"/>
</dbReference>
<dbReference type="InterPro" id="IPR036291">
    <property type="entry name" value="NAD(P)-bd_dom_sf"/>
</dbReference>
<dbReference type="InterPro" id="IPR022872">
    <property type="entry name" value="Quinate/Shikimate_DH"/>
</dbReference>
<dbReference type="InterPro" id="IPR041121">
    <property type="entry name" value="SDH_C"/>
</dbReference>
<dbReference type="InterPro" id="IPR013708">
    <property type="entry name" value="Shikimate_DH-bd_N"/>
</dbReference>
<dbReference type="InterPro" id="IPR022893">
    <property type="entry name" value="Shikimate_DH_fam"/>
</dbReference>
<dbReference type="NCBIfam" id="NF009390">
    <property type="entry name" value="PRK12749.1"/>
    <property type="match status" value="1"/>
</dbReference>
<dbReference type="PANTHER" id="PTHR21089:SF1">
    <property type="entry name" value="BIFUNCTIONAL 3-DEHYDROQUINATE DEHYDRATASE_SHIKIMATE DEHYDROGENASE, CHLOROPLASTIC"/>
    <property type="match status" value="1"/>
</dbReference>
<dbReference type="PANTHER" id="PTHR21089">
    <property type="entry name" value="SHIKIMATE DEHYDROGENASE"/>
    <property type="match status" value="1"/>
</dbReference>
<dbReference type="Pfam" id="PF18317">
    <property type="entry name" value="SDH_C"/>
    <property type="match status" value="1"/>
</dbReference>
<dbReference type="Pfam" id="PF08501">
    <property type="entry name" value="Shikimate_dh_N"/>
    <property type="match status" value="1"/>
</dbReference>
<dbReference type="SUPFAM" id="SSF53223">
    <property type="entry name" value="Aminoacid dehydrogenase-like, N-terminal domain"/>
    <property type="match status" value="1"/>
</dbReference>
<dbReference type="SUPFAM" id="SSF51735">
    <property type="entry name" value="NAD(P)-binding Rossmann-fold domains"/>
    <property type="match status" value="1"/>
</dbReference>
<proteinExistence type="inferred from homology"/>
<keyword id="KW-0028">Amino-acid biosynthesis</keyword>
<keyword id="KW-0057">Aromatic amino acid biosynthesis</keyword>
<keyword id="KW-0520">NAD</keyword>
<keyword id="KW-0521">NADP</keyword>
<keyword id="KW-0560">Oxidoreductase</keyword>